<feature type="signal peptide" evidence="1">
    <location>
        <begin position="1"/>
        <end position="24"/>
    </location>
</feature>
<feature type="chain" id="PRO_5003439027" description="Secreted LysM effector Vd4LysM">
    <location>
        <begin position="25"/>
        <end position="375"/>
    </location>
</feature>
<feature type="domain" description="LysM 1" evidence="2">
    <location>
        <begin position="57"/>
        <end position="104"/>
    </location>
</feature>
<feature type="domain" description="LysM 2" evidence="2">
    <location>
        <begin position="149"/>
        <end position="195"/>
    </location>
</feature>
<feature type="domain" description="LysM 3" evidence="2">
    <location>
        <begin position="237"/>
        <end position="283"/>
    </location>
</feature>
<feature type="domain" description="LysM 4" evidence="2">
    <location>
        <begin position="326"/>
        <end position="372"/>
    </location>
</feature>
<feature type="region of interest" description="Disordered" evidence="3">
    <location>
        <begin position="108"/>
        <end position="139"/>
    </location>
</feature>
<feature type="region of interest" description="Disordered" evidence="3">
    <location>
        <begin position="206"/>
        <end position="225"/>
    </location>
</feature>
<feature type="region of interest" description="Disordered" evidence="3">
    <location>
        <begin position="287"/>
        <end position="317"/>
    </location>
</feature>
<feature type="compositionally biased region" description="Low complexity" evidence="3">
    <location>
        <begin position="116"/>
        <end position="129"/>
    </location>
</feature>
<feature type="compositionally biased region" description="Low complexity" evidence="3">
    <location>
        <begin position="206"/>
        <end position="217"/>
    </location>
</feature>
<feature type="compositionally biased region" description="Low complexity" evidence="3">
    <location>
        <begin position="296"/>
        <end position="317"/>
    </location>
</feature>
<sequence>MPSVTISSTMLAGLLLMLVPASSAAPRPQAREDVPMRLLQDAKPAFPYDPNTIAKCSWWWDNEGQIPCANMPAEWGITMQDFLRWNPSITSSCGNFLNGRSYCVEASGEEPPVPGTPTTTTAPATTTKPSNGITTPQPIQDGMVGNCNKFHYISEGDRCQDILSYQKITLADFFKWNPAVKSDCSGLWSKTNACVGVVGQAPAVTTTTTKPATPTTPSNGITTPQPIQAGMVGNCNKFHYISEGDRCQDILSYQKITQADFFKWNPAVKSDCSGLWSKTHACVGVIGGQAPPPTPTTTKPTTTKPPGNGVTTPTPTQPGMVTNCNKFHFVSPGNTCQQIVSYQKITMANFVKWNSGAGSGCNNLWGNTHACVGVF</sequence>
<comment type="function">
    <text evidence="4 7">Might have a role in sequestration of chitin oligosaccharides (breakdown products of fungal cell walls that are released during invasion and act as triggers of host immunity) to dampen host defense (Probable). Does not play an important role during host colonization (PubMed:27911046).</text>
</comment>
<comment type="domain">
    <text evidence="7">The LysM (lysin motif) domains are small globular domains involved in binding chitin in eukaryotes. Vd4LysM contains 4 LysM domains.</text>
</comment>
<comment type="disruption phenotype">
    <text evidence="4">Does not affect virulence on Arabidopsis, N.benthamiana and tomato.</text>
</comment>
<comment type="miscellaneous">
    <text evidence="6">In plants, chitin acts as a microbe-associated molecular pattern (MAMP) that is recognized by lysin motif (LysM)-containing plant cell surface-localized pattern recognition receptors (PRRs) that activate a plethora of downstream immune responses.</text>
</comment>
<comment type="similarity">
    <text evidence="6">Belongs to the secreted LysM effector family.</text>
</comment>
<name>LYSM4_VERDV</name>
<evidence type="ECO:0000255" key="1"/>
<evidence type="ECO:0000255" key="2">
    <source>
        <dbReference type="PROSITE-ProRule" id="PRU01118"/>
    </source>
</evidence>
<evidence type="ECO:0000256" key="3">
    <source>
        <dbReference type="SAM" id="MobiDB-lite"/>
    </source>
</evidence>
<evidence type="ECO:0000269" key="4">
    <source>
    </source>
</evidence>
<evidence type="ECO:0000303" key="5">
    <source>
    </source>
</evidence>
<evidence type="ECO:0000305" key="6"/>
<evidence type="ECO:0000305" key="7">
    <source>
    </source>
</evidence>
<accession>G2WSX9</accession>
<keyword id="KW-0147">Chitin-binding</keyword>
<keyword id="KW-1185">Reference proteome</keyword>
<keyword id="KW-0677">Repeat</keyword>
<keyword id="KW-0732">Signal</keyword>
<keyword id="KW-0843">Virulence</keyword>
<proteinExistence type="inferred from homology"/>
<organism>
    <name type="scientific">Verticillium dahliae (strain VdLs.17 / ATCC MYA-4575 / FGSC 10137)</name>
    <name type="common">Verticillium wilt</name>
    <dbReference type="NCBI Taxonomy" id="498257"/>
    <lineage>
        <taxon>Eukaryota</taxon>
        <taxon>Fungi</taxon>
        <taxon>Dikarya</taxon>
        <taxon>Ascomycota</taxon>
        <taxon>Pezizomycotina</taxon>
        <taxon>Sordariomycetes</taxon>
        <taxon>Hypocreomycetidae</taxon>
        <taxon>Glomerellales</taxon>
        <taxon>Plectosphaerellaceae</taxon>
        <taxon>Verticillium</taxon>
    </lineage>
</organism>
<reference key="1">
    <citation type="journal article" date="2011" name="PLoS Pathog.">
        <title>Comparative genomics yields insights into niche adaptation of plant vascular wilt pathogens.</title>
        <authorList>
            <person name="Klosterman S.J."/>
            <person name="Subbarao K.V."/>
            <person name="Kang S."/>
            <person name="Veronese P."/>
            <person name="Gold S.E."/>
            <person name="Thomma B.P.H.J."/>
            <person name="Chen Z."/>
            <person name="Henrissat B."/>
            <person name="Lee Y.-H."/>
            <person name="Park J."/>
            <person name="Garcia-Pedrajas M.D."/>
            <person name="Barbara D.J."/>
            <person name="Anchieta A."/>
            <person name="de Jonge R."/>
            <person name="Santhanam P."/>
            <person name="Maruthachalam K."/>
            <person name="Atallah Z."/>
            <person name="Amyotte S.G."/>
            <person name="Paz Z."/>
            <person name="Inderbitzin P."/>
            <person name="Hayes R.J."/>
            <person name="Heiman D.I."/>
            <person name="Young S."/>
            <person name="Zeng Q."/>
            <person name="Engels R."/>
            <person name="Galagan J."/>
            <person name="Cuomo C.A."/>
            <person name="Dobinson K.F."/>
            <person name="Ma L.-J."/>
        </authorList>
    </citation>
    <scope>NUCLEOTIDE SEQUENCE [LARGE SCALE GENOMIC DNA]</scope>
    <source>
        <strain>VdLs.17 / ATCC MYA-4575 / FGSC 10137</strain>
    </source>
</reference>
<reference key="2">
    <citation type="journal article" date="2017" name="Mol. Plant Pathol.">
        <title>Verticillium dahliae LysM effectors differentially contribute to virulence on plant hosts.</title>
        <authorList>
            <person name="Kombrink A."/>
            <person name="Rovenich H."/>
            <person name="Shi-Kunne X."/>
            <person name="Rojas-Padilla E."/>
            <person name="van den Berg G.C."/>
            <person name="Domazakis E."/>
            <person name="de Jonge R."/>
            <person name="Valkenburg D.J."/>
            <person name="Sanchez-Vallet A."/>
            <person name="Seidl M.F."/>
            <person name="Thomma B.P."/>
        </authorList>
    </citation>
    <scope>FUNCTION</scope>
    <scope>DOMAIN</scope>
    <scope>DISRUPTION PHENOTYPE</scope>
</reference>
<gene>
    <name evidence="5" type="primary">Vd4LysM</name>
    <name type="ORF">VDAG_00902</name>
</gene>
<protein>
    <recommendedName>
        <fullName evidence="5">Secreted LysM effector Vd4LysM</fullName>
    </recommendedName>
    <alternativeName>
        <fullName evidence="5">Four LysM domain-containing protein</fullName>
    </alternativeName>
    <alternativeName>
        <fullName evidence="5">LysM domain-containing protein Vd4LysM</fullName>
    </alternativeName>
</protein>
<dbReference type="EMBL" id="DS572696">
    <property type="protein sequence ID" value="EGY17220.1"/>
    <property type="molecule type" value="Genomic_DNA"/>
</dbReference>
<dbReference type="RefSeq" id="XP_009648083.1">
    <property type="nucleotide sequence ID" value="XM_009649788.1"/>
</dbReference>
<dbReference type="STRING" id="498257.G2WSX9"/>
<dbReference type="EnsemblFungi" id="EGY17220">
    <property type="protein sequence ID" value="EGY17220"/>
    <property type="gene ID" value="VDAG_00902"/>
</dbReference>
<dbReference type="GeneID" id="20702365"/>
<dbReference type="KEGG" id="vda:VDAG_00902"/>
<dbReference type="eggNOG" id="KOG2806">
    <property type="taxonomic scope" value="Eukaryota"/>
</dbReference>
<dbReference type="HOGENOM" id="CLU_010591_8_0_1"/>
<dbReference type="InParanoid" id="G2WSX9"/>
<dbReference type="OMA" id="AGLWPNY"/>
<dbReference type="OrthoDB" id="54734at1028384"/>
<dbReference type="PHI-base" id="PHI:6831"/>
<dbReference type="Proteomes" id="UP000001611">
    <property type="component" value="Chromosome 1"/>
</dbReference>
<dbReference type="GO" id="GO:0008061">
    <property type="term" value="F:chitin binding"/>
    <property type="evidence" value="ECO:0007669"/>
    <property type="project" value="UniProtKB-KW"/>
</dbReference>
<dbReference type="CDD" id="cd00118">
    <property type="entry name" value="LysM"/>
    <property type="match status" value="2"/>
</dbReference>
<dbReference type="Gene3D" id="3.10.350.10">
    <property type="entry name" value="LysM domain"/>
    <property type="match status" value="4"/>
</dbReference>
<dbReference type="InterPro" id="IPR052210">
    <property type="entry name" value="LysM1-like"/>
</dbReference>
<dbReference type="InterPro" id="IPR018392">
    <property type="entry name" value="LysM_dom"/>
</dbReference>
<dbReference type="InterPro" id="IPR036779">
    <property type="entry name" value="LysM_dom_sf"/>
</dbReference>
<dbReference type="PANTHER" id="PTHR34997">
    <property type="entry name" value="AM15"/>
    <property type="match status" value="1"/>
</dbReference>
<dbReference type="PANTHER" id="PTHR34997:SF2">
    <property type="entry name" value="LYSM DOMAIN-CONTAINING PROTEIN-RELATED"/>
    <property type="match status" value="1"/>
</dbReference>
<dbReference type="SUPFAM" id="SSF54106">
    <property type="entry name" value="LysM domain"/>
    <property type="match status" value="1"/>
</dbReference>
<dbReference type="PROSITE" id="PS51782">
    <property type="entry name" value="LYSM"/>
    <property type="match status" value="4"/>
</dbReference>